<sequence length="145" mass="15448">MPGKILLLNGPNLNMLGKREPDIYGHDTLEDVVALATAEAAKHGLEVEALQSNHEGELIDALHNARGTHIGCVINPGGLTHTSVALLDAVKASELPTVEVHISNPHAREEFRHHSYISLAAVSVIAGAGIQGYRFAVDILANLKK</sequence>
<evidence type="ECO:0000250" key="1"/>
<evidence type="ECO:0000305" key="2"/>
<evidence type="ECO:0007829" key="3">
    <source>
        <dbReference type="PDB" id="8IDR"/>
    </source>
</evidence>
<dbReference type="EC" id="4.2.1.10"/>
<dbReference type="EMBL" id="AF036932">
    <property type="protein sequence ID" value="AAB88864.1"/>
    <property type="molecule type" value="Genomic_DNA"/>
</dbReference>
<dbReference type="EMBL" id="BA000036">
    <property type="protein sequence ID" value="BAB97816.1"/>
    <property type="status" value="ALT_INIT"/>
    <property type="molecule type" value="Genomic_DNA"/>
</dbReference>
<dbReference type="EMBL" id="BX927149">
    <property type="protein sequence ID" value="CAF19139.1"/>
    <property type="molecule type" value="Genomic_DNA"/>
</dbReference>
<dbReference type="RefSeq" id="NP_599670.1">
    <property type="nucleotide sequence ID" value="NC_003450.3"/>
</dbReference>
<dbReference type="RefSeq" id="WP_003860435.1">
    <property type="nucleotide sequence ID" value="NC_006958.1"/>
</dbReference>
<dbReference type="PDB" id="8IDR">
    <property type="method" value="X-ray"/>
    <property type="resolution" value="1.80 A"/>
    <property type="chains" value="A/B/C/D=1-145"/>
</dbReference>
<dbReference type="PDB" id="8IDU">
    <property type="method" value="X-ray"/>
    <property type="resolution" value="2.00 A"/>
    <property type="chains" value="A/B/C/D/E/F=1-145"/>
</dbReference>
<dbReference type="PDBsum" id="8IDR"/>
<dbReference type="PDBsum" id="8IDU"/>
<dbReference type="SMR" id="O52377"/>
<dbReference type="STRING" id="196627.cg0503"/>
<dbReference type="GeneID" id="1021131"/>
<dbReference type="KEGG" id="cgb:cg0503"/>
<dbReference type="KEGG" id="cgl:Cgl0423"/>
<dbReference type="PATRIC" id="fig|196627.13.peg.422"/>
<dbReference type="eggNOG" id="COG0757">
    <property type="taxonomic scope" value="Bacteria"/>
</dbReference>
<dbReference type="HOGENOM" id="CLU_090968_2_0_11"/>
<dbReference type="OrthoDB" id="9790793at2"/>
<dbReference type="BioCyc" id="CORYNE:G18NG-9980-MONOMER"/>
<dbReference type="BRENDA" id="4.2.1.10">
    <property type="organism ID" value="960"/>
</dbReference>
<dbReference type="UniPathway" id="UPA00053">
    <property type="reaction ID" value="UER00086"/>
</dbReference>
<dbReference type="Proteomes" id="UP000000582">
    <property type="component" value="Chromosome"/>
</dbReference>
<dbReference type="Proteomes" id="UP000001009">
    <property type="component" value="Chromosome"/>
</dbReference>
<dbReference type="GO" id="GO:0003855">
    <property type="term" value="F:3-dehydroquinate dehydratase activity"/>
    <property type="evidence" value="ECO:0007669"/>
    <property type="project" value="UniProtKB-UniRule"/>
</dbReference>
<dbReference type="GO" id="GO:0008652">
    <property type="term" value="P:amino acid biosynthetic process"/>
    <property type="evidence" value="ECO:0007669"/>
    <property type="project" value="UniProtKB-KW"/>
</dbReference>
<dbReference type="GO" id="GO:0009073">
    <property type="term" value="P:aromatic amino acid family biosynthetic process"/>
    <property type="evidence" value="ECO:0007669"/>
    <property type="project" value="UniProtKB-KW"/>
</dbReference>
<dbReference type="GO" id="GO:0009423">
    <property type="term" value="P:chorismate biosynthetic process"/>
    <property type="evidence" value="ECO:0007669"/>
    <property type="project" value="UniProtKB-UniRule"/>
</dbReference>
<dbReference type="GO" id="GO:0019631">
    <property type="term" value="P:quinate catabolic process"/>
    <property type="evidence" value="ECO:0007669"/>
    <property type="project" value="TreeGrafter"/>
</dbReference>
<dbReference type="CDD" id="cd00466">
    <property type="entry name" value="DHQase_II"/>
    <property type="match status" value="1"/>
</dbReference>
<dbReference type="Gene3D" id="3.40.50.9100">
    <property type="entry name" value="Dehydroquinase, class II"/>
    <property type="match status" value="1"/>
</dbReference>
<dbReference type="HAMAP" id="MF_00169">
    <property type="entry name" value="AroQ"/>
    <property type="match status" value="1"/>
</dbReference>
<dbReference type="InterPro" id="IPR001874">
    <property type="entry name" value="DHquinase_II"/>
</dbReference>
<dbReference type="InterPro" id="IPR018509">
    <property type="entry name" value="DHquinase_II_CS"/>
</dbReference>
<dbReference type="InterPro" id="IPR036441">
    <property type="entry name" value="DHquinase_II_sf"/>
</dbReference>
<dbReference type="NCBIfam" id="TIGR01088">
    <property type="entry name" value="aroQ"/>
    <property type="match status" value="1"/>
</dbReference>
<dbReference type="NCBIfam" id="NF003805">
    <property type="entry name" value="PRK05395.1-2"/>
    <property type="match status" value="1"/>
</dbReference>
<dbReference type="NCBIfam" id="NF003806">
    <property type="entry name" value="PRK05395.1-3"/>
    <property type="match status" value="1"/>
</dbReference>
<dbReference type="NCBIfam" id="NF003807">
    <property type="entry name" value="PRK05395.1-4"/>
    <property type="match status" value="1"/>
</dbReference>
<dbReference type="PANTHER" id="PTHR21272">
    <property type="entry name" value="CATABOLIC 3-DEHYDROQUINASE"/>
    <property type="match status" value="1"/>
</dbReference>
<dbReference type="PANTHER" id="PTHR21272:SF3">
    <property type="entry name" value="CATABOLIC 3-DEHYDROQUINASE"/>
    <property type="match status" value="1"/>
</dbReference>
<dbReference type="Pfam" id="PF01220">
    <property type="entry name" value="DHquinase_II"/>
    <property type="match status" value="1"/>
</dbReference>
<dbReference type="PIRSF" id="PIRSF001399">
    <property type="entry name" value="DHquinase_II"/>
    <property type="match status" value="1"/>
</dbReference>
<dbReference type="SUPFAM" id="SSF52304">
    <property type="entry name" value="Type II 3-dehydroquinate dehydratase"/>
    <property type="match status" value="1"/>
</dbReference>
<dbReference type="PROSITE" id="PS01029">
    <property type="entry name" value="DEHYDROQUINASE_II"/>
    <property type="match status" value="1"/>
</dbReference>
<protein>
    <recommendedName>
        <fullName>3-dehydroquinate dehydratase</fullName>
        <shortName>3-dehydroquinase</shortName>
        <ecNumber>4.2.1.10</ecNumber>
    </recommendedName>
    <alternativeName>
        <fullName>Type II DHQase</fullName>
    </alternativeName>
</protein>
<keyword id="KW-0002">3D-structure</keyword>
<keyword id="KW-0028">Amino-acid biosynthesis</keyword>
<keyword id="KW-0057">Aromatic amino acid biosynthesis</keyword>
<keyword id="KW-0456">Lyase</keyword>
<keyword id="KW-1185">Reference proteome</keyword>
<name>AROQ_CORGL</name>
<accession>O52377</accession>
<organism>
    <name type="scientific">Corynebacterium glutamicum (strain ATCC 13032 / DSM 20300 / JCM 1318 / BCRC 11384 / CCUG 27702 / LMG 3730 / NBRC 12168 / NCIMB 10025 / NRRL B-2784 / 534)</name>
    <dbReference type="NCBI Taxonomy" id="196627"/>
    <lineage>
        <taxon>Bacteria</taxon>
        <taxon>Bacillati</taxon>
        <taxon>Actinomycetota</taxon>
        <taxon>Actinomycetes</taxon>
        <taxon>Mycobacteriales</taxon>
        <taxon>Corynebacteriaceae</taxon>
        <taxon>Corynebacterium</taxon>
    </lineage>
</organism>
<proteinExistence type="evidence at protein level"/>
<feature type="chain" id="PRO_0000159896" description="3-dehydroquinate dehydratase">
    <location>
        <begin position="1"/>
        <end position="145"/>
    </location>
</feature>
<feature type="active site" description="Proton acceptor" evidence="1">
    <location>
        <position position="24"/>
    </location>
</feature>
<feature type="active site" description="Proton donor" evidence="1">
    <location>
        <position position="101"/>
    </location>
</feature>
<feature type="binding site" evidence="1">
    <location>
        <position position="75"/>
    </location>
    <ligand>
        <name>substrate</name>
    </ligand>
</feature>
<feature type="binding site" evidence="1">
    <location>
        <position position="81"/>
    </location>
    <ligand>
        <name>substrate</name>
    </ligand>
</feature>
<feature type="binding site" evidence="1">
    <location>
        <position position="88"/>
    </location>
    <ligand>
        <name>substrate</name>
    </ligand>
</feature>
<feature type="binding site" evidence="1">
    <location>
        <begin position="102"/>
        <end position="103"/>
    </location>
    <ligand>
        <name>substrate</name>
    </ligand>
</feature>
<feature type="binding site" evidence="1">
    <location>
        <position position="112"/>
    </location>
    <ligand>
        <name>substrate</name>
    </ligand>
</feature>
<feature type="site" description="Transition state stabilizer" evidence="1">
    <location>
        <position position="19"/>
    </location>
</feature>
<feature type="strand" evidence="3">
    <location>
        <begin position="4"/>
        <end position="9"/>
    </location>
</feature>
<feature type="helix" evidence="3">
    <location>
        <begin position="13"/>
        <end position="15"/>
    </location>
</feature>
<feature type="turn" evidence="3">
    <location>
        <begin position="16"/>
        <end position="18"/>
    </location>
</feature>
<feature type="helix" evidence="3">
    <location>
        <begin position="21"/>
        <end position="24"/>
    </location>
</feature>
<feature type="helix" evidence="3">
    <location>
        <begin position="29"/>
        <end position="42"/>
    </location>
</feature>
<feature type="strand" evidence="3">
    <location>
        <begin position="46"/>
        <end position="51"/>
    </location>
</feature>
<feature type="helix" evidence="3">
    <location>
        <begin position="55"/>
        <end position="65"/>
    </location>
</feature>
<feature type="turn" evidence="3">
    <location>
        <begin position="66"/>
        <end position="68"/>
    </location>
</feature>
<feature type="strand" evidence="3">
    <location>
        <begin position="69"/>
        <end position="75"/>
    </location>
</feature>
<feature type="helix" evidence="3">
    <location>
        <begin position="77"/>
        <end position="81"/>
    </location>
</feature>
<feature type="helix" evidence="3">
    <location>
        <begin position="84"/>
        <end position="93"/>
    </location>
</feature>
<feature type="strand" evidence="3">
    <location>
        <begin position="97"/>
        <end position="103"/>
    </location>
</feature>
<feature type="helix" evidence="3">
    <location>
        <begin position="105"/>
        <end position="107"/>
    </location>
</feature>
<feature type="helix" evidence="3">
    <location>
        <begin position="110"/>
        <end position="112"/>
    </location>
</feature>
<feature type="helix" evidence="3">
    <location>
        <begin position="117"/>
        <end position="119"/>
    </location>
</feature>
<feature type="strand" evidence="3">
    <location>
        <begin position="122"/>
        <end position="128"/>
    </location>
</feature>
<feature type="helix" evidence="3">
    <location>
        <begin position="131"/>
        <end position="145"/>
    </location>
</feature>
<gene>
    <name type="primary">aroQ</name>
    <name type="synonym">aroD</name>
    <name type="ordered locus">Cgl0423</name>
    <name type="ordered locus">cg0503</name>
</gene>
<reference key="1">
    <citation type="submission" date="1997-12" db="EMBL/GenBank/DDBJ databases">
        <title>Molecular cloning of the aroD gene from Corynebacterium glutamicum.</title>
        <authorList>
            <person name="Park K.-Y."/>
            <person name="Lee M.-S."/>
        </authorList>
    </citation>
    <scope>NUCLEOTIDE SEQUENCE [GENOMIC DNA]</scope>
    <source>
        <strain>ATCC 13059 / LMG 3658 / NCIB 10332 / AS019 / 613</strain>
    </source>
</reference>
<reference key="2">
    <citation type="journal article" date="2003" name="Appl. Microbiol. Biotechnol.">
        <title>The Corynebacterium glutamicum genome: features and impacts on biotechnological processes.</title>
        <authorList>
            <person name="Ikeda M."/>
            <person name="Nakagawa S."/>
        </authorList>
    </citation>
    <scope>NUCLEOTIDE SEQUENCE [LARGE SCALE GENOMIC DNA]</scope>
    <source>
        <strain>ATCC 13032 / DSM 20300 / JCM 1318 / BCRC 11384 / CCUG 27702 / LMG 3730 / NBRC 12168 / NCIMB 10025 / NRRL B-2784 / 534</strain>
    </source>
</reference>
<reference key="3">
    <citation type="journal article" date="2003" name="J. Biotechnol.">
        <title>The complete Corynebacterium glutamicum ATCC 13032 genome sequence and its impact on the production of L-aspartate-derived amino acids and vitamins.</title>
        <authorList>
            <person name="Kalinowski J."/>
            <person name="Bathe B."/>
            <person name="Bartels D."/>
            <person name="Bischoff N."/>
            <person name="Bott M."/>
            <person name="Burkovski A."/>
            <person name="Dusch N."/>
            <person name="Eggeling L."/>
            <person name="Eikmanns B.J."/>
            <person name="Gaigalat L."/>
            <person name="Goesmann A."/>
            <person name="Hartmann M."/>
            <person name="Huthmacher K."/>
            <person name="Kraemer R."/>
            <person name="Linke B."/>
            <person name="McHardy A.C."/>
            <person name="Meyer F."/>
            <person name="Moeckel B."/>
            <person name="Pfefferle W."/>
            <person name="Puehler A."/>
            <person name="Rey D.A."/>
            <person name="Rueckert C."/>
            <person name="Rupp O."/>
            <person name="Sahm H."/>
            <person name="Wendisch V.F."/>
            <person name="Wiegraebe I."/>
            <person name="Tauch A."/>
        </authorList>
    </citation>
    <scope>NUCLEOTIDE SEQUENCE [LARGE SCALE GENOMIC DNA]</scope>
    <source>
        <strain>ATCC 13032 / DSM 20300 / JCM 1318 / BCRC 11384 / CCUG 27702 / LMG 3730 / NBRC 12168 / NCIMB 10025 / NRRL B-2784 / 534</strain>
    </source>
</reference>
<comment type="function">
    <text evidence="1">Catalyzes a trans-dehydration via an enolate intermediate.</text>
</comment>
<comment type="catalytic activity">
    <reaction>
        <text>3-dehydroquinate = 3-dehydroshikimate + H2O</text>
        <dbReference type="Rhea" id="RHEA:21096"/>
        <dbReference type="ChEBI" id="CHEBI:15377"/>
        <dbReference type="ChEBI" id="CHEBI:16630"/>
        <dbReference type="ChEBI" id="CHEBI:32364"/>
        <dbReference type="EC" id="4.2.1.10"/>
    </reaction>
</comment>
<comment type="pathway">
    <text>Metabolic intermediate biosynthesis; chorismate biosynthesis; chorismate from D-erythrose 4-phosphate and phosphoenolpyruvate: step 3/7.</text>
</comment>
<comment type="subunit">
    <text evidence="1">Homododecamer.</text>
</comment>
<comment type="similarity">
    <text evidence="2">Belongs to the type-II 3-dehydroquinase family.</text>
</comment>
<comment type="sequence caution" evidence="2">
    <conflict type="erroneous initiation">
        <sequence resource="EMBL-CDS" id="BAB97816"/>
    </conflict>
</comment>